<protein>
    <recommendedName>
        <fullName evidence="3">Conidial pigment biosynthesis dehydratase EthD</fullName>
        <ecNumber evidence="5">1.-.-.-</ecNumber>
    </recommendedName>
</protein>
<accession>E9F647</accession>
<proteinExistence type="evidence at transcript level"/>
<keyword id="KW-0503">Monooxygenase</keyword>
<keyword id="KW-0560">Oxidoreductase</keyword>
<dbReference type="EC" id="1.-.-.-" evidence="5"/>
<dbReference type="EMBL" id="ADNJ02000010">
    <property type="protein sequence ID" value="EFY96685.2"/>
    <property type="molecule type" value="Genomic_DNA"/>
</dbReference>
<dbReference type="RefSeq" id="XP_007823935.2">
    <property type="nucleotide sequence ID" value="XM_007825744.2"/>
</dbReference>
<dbReference type="SMR" id="E9F647"/>
<dbReference type="GeneID" id="19262032"/>
<dbReference type="KEGG" id="maj:MAA_07746"/>
<dbReference type="HOGENOM" id="CLU_115019_0_0_1"/>
<dbReference type="OrthoDB" id="3454835at2759"/>
<dbReference type="Proteomes" id="UP000002498">
    <property type="component" value="Unassembled WGS sequence"/>
</dbReference>
<dbReference type="GO" id="GO:0004497">
    <property type="term" value="F:monooxygenase activity"/>
    <property type="evidence" value="ECO:0007669"/>
    <property type="project" value="UniProtKB-KW"/>
</dbReference>
<dbReference type="Gene3D" id="3.30.70.100">
    <property type="match status" value="1"/>
</dbReference>
<dbReference type="InterPro" id="IPR011008">
    <property type="entry name" value="Dimeric_a/b-barrel"/>
</dbReference>
<dbReference type="InterPro" id="IPR009799">
    <property type="entry name" value="EthD_dom"/>
</dbReference>
<dbReference type="Pfam" id="PF07110">
    <property type="entry name" value="EthD"/>
    <property type="match status" value="1"/>
</dbReference>
<dbReference type="SUPFAM" id="SSF54909">
    <property type="entry name" value="Dimeric alpha+beta barrel"/>
    <property type="match status" value="1"/>
</dbReference>
<feature type="chain" id="PRO_0000445753" description="Conidial pigment biosynthesis dehydratase EthD">
    <location>
        <begin position="1"/>
        <end position="142"/>
    </location>
</feature>
<feature type="domain" description="EthD" evidence="1">
    <location>
        <begin position="25"/>
        <end position="121"/>
    </location>
</feature>
<comment type="function">
    <text evidence="2 6">Dehydratase; part of the Pks1 gene cluster that mediates the biosynthesis of an anthraquinone derivative pigment that contributes to conidial pigmentation that provides protection from UV radiation, heat and cold stress (PubMed:28447400). The polyketide synthase Pks1 produces 1-acetyl-2,4,6,8-tetrahydroxy-9,10-anthraquinone though condensation of acetyl-CoA with malonyl-CoA (Probable). The dehydratase EthD and the laccase Mlac1 further convert the anthraquinone derivative into the final conidial pigment (Probable).</text>
</comment>
<comment type="pathway">
    <text evidence="2">Pigment biosynthesis.</text>
</comment>
<comment type="induction">
    <text evidence="2">Highly expressed during conidiation (PubMed:28447400). A conserved conidiation regulatory pathway containing BrlA, AbaA and WetA regulates expression. During conidiation BlrA up-regulates AbaA, which in turn controls WetA. Moreover, the Hog1 MAPK regulates fungal conidiation by controlling the conidiation regulatory pathway, and that all three pigmentation genes Pks1, EthD and Mlac1 exercise feedback regulation of conidiation (PubMed:28447400).</text>
</comment>
<comment type="disruption phenotype">
    <text evidence="2">Leads to the production of dark red conidia (PubMed:28447400). Does not affect virulence (PubMed:28447400).</text>
</comment>
<comment type="similarity">
    <text evidence="4">Belongs to the tpcK family.</text>
</comment>
<evidence type="ECO:0000255" key="1"/>
<evidence type="ECO:0000269" key="2">
    <source>
    </source>
</evidence>
<evidence type="ECO:0000303" key="3">
    <source>
    </source>
</evidence>
<evidence type="ECO:0000305" key="4"/>
<evidence type="ECO:0000305" key="5">
    <source>
    </source>
</evidence>
<evidence type="ECO:0000305" key="6">
    <source>
    </source>
</evidence>
<reference key="1">
    <citation type="journal article" date="2011" name="PLoS Genet.">
        <title>Genome sequencing and comparative transcriptomics of the model entomopathogenic fungi Metarhizium anisopliae and M. acridum.</title>
        <authorList>
            <person name="Gao Q."/>
            <person name="Jin K."/>
            <person name="Ying S.-H."/>
            <person name="Zhang Y."/>
            <person name="Xiao G."/>
            <person name="Shang Y."/>
            <person name="Duan Z."/>
            <person name="Hu X."/>
            <person name="Xie X.-Q."/>
            <person name="Zhou G."/>
            <person name="Peng G."/>
            <person name="Luo Z."/>
            <person name="Huang W."/>
            <person name="Wang B."/>
            <person name="Fang W."/>
            <person name="Wang S."/>
            <person name="Zhong Y."/>
            <person name="Ma L.-J."/>
            <person name="St Leger R.J."/>
            <person name="Zhao G.-P."/>
            <person name="Pei Y."/>
            <person name="Feng M.-G."/>
            <person name="Xia Y."/>
            <person name="Wang C."/>
        </authorList>
    </citation>
    <scope>NUCLEOTIDE SEQUENCE [LARGE SCALE GENOMIC DNA]</scope>
    <source>
        <strain>ARSEF 23 / ATCC MYA-3075</strain>
    </source>
</reference>
<reference key="2">
    <citation type="journal article" date="2014" name="Proc. Natl. Acad. Sci. U.S.A.">
        <title>Trajectory and genomic determinants of fungal-pathogen speciation and host adaptation.</title>
        <authorList>
            <person name="Hu X."/>
            <person name="Xiao G."/>
            <person name="Zheng P."/>
            <person name="Shang Y."/>
            <person name="Su Y."/>
            <person name="Zhang X."/>
            <person name="Liu X."/>
            <person name="Zhan S."/>
            <person name="St Leger R.J."/>
            <person name="Wang C."/>
        </authorList>
    </citation>
    <scope>GENOME REANNOTATION</scope>
    <source>
        <strain>ARSEF 23 / ATCC MYA-3075</strain>
    </source>
</reference>
<reference key="3">
    <citation type="journal article" date="2010" name="Fungal Genet. Biol.">
        <title>A laccase exclusively expressed by Metarhizium anisopliae during isotropic growth is involved in pigmentation, tolerance to abiotic stresses and virulence.</title>
        <authorList>
            <person name="Fang W."/>
            <person name="Fernandes E.K."/>
            <person name="Roberts D.W."/>
            <person name="Bidochka M.J."/>
            <person name="St Leger R.J."/>
        </authorList>
    </citation>
    <scope>FUNCTION</scope>
</reference>
<reference key="4">
    <citation type="journal article" date="2015" name="Fungal Genet. Biol.">
        <title>Biosynthesis of non-melanin pigment by a divergent polyketide synthase in Metarhizium robertsii.</title>
        <authorList>
            <person name="Chen Y."/>
            <person name="Feng P."/>
            <person name="Shang Y."/>
            <person name="Xu Y.J."/>
            <person name="Wang C."/>
        </authorList>
    </citation>
    <scope>FUNCTION</scope>
</reference>
<reference key="5">
    <citation type="journal article" date="2017" name="Environ. Microbiol.">
        <title>Genome-wide identification of pathogenicity, conidiation and colony sectorization genes in Metarhizium robertsii.</title>
        <authorList>
            <person name="Zeng G."/>
            <person name="Chen X."/>
            <person name="Zhang X."/>
            <person name="Zhang Q."/>
            <person name="Xu C."/>
            <person name="Mi W."/>
            <person name="Guo N."/>
            <person name="Zhao H."/>
            <person name="You Y."/>
            <person name="Dryburgh F.J."/>
            <person name="Bidochka M.J."/>
            <person name="St Leger R.J."/>
            <person name="Zhang L."/>
            <person name="Fang W."/>
        </authorList>
    </citation>
    <scope>IDENTIFICATION</scope>
    <scope>FUNCTION</scope>
    <scope>DISRUPTION PHENOTYPE</scope>
    <scope>PATHWAY</scope>
</reference>
<reference key="6">
    <citation type="journal article" date="2018" name="PLoS Genet.">
        <title>Duplication of a Pks gene cluster and subsequent functional diversification facilitate environmental adaptation in Metarhizium species.</title>
        <authorList>
            <person name="Zeng G."/>
            <person name="Zhang P."/>
            <person name="Zhang Q."/>
            <person name="Zhao H."/>
            <person name="Li Z."/>
            <person name="Zhang X."/>
            <person name="Wang C."/>
            <person name="Yin W.B."/>
            <person name="Fang W."/>
        </authorList>
    </citation>
    <scope>IDENTIFICATION</scope>
    <scope>FUNCTION</scope>
</reference>
<name>ETHD_METRA</name>
<gene>
    <name evidence="3" type="primary">EthD</name>
    <name type="ORF">MAA_07746</name>
</gene>
<organism>
    <name type="scientific">Metarhizium robertsii (strain ARSEF 23 / ATCC MYA-3075)</name>
    <name type="common">Metarhizium anisopliae (strain ARSEF 23)</name>
    <dbReference type="NCBI Taxonomy" id="655844"/>
    <lineage>
        <taxon>Eukaryota</taxon>
        <taxon>Fungi</taxon>
        <taxon>Dikarya</taxon>
        <taxon>Ascomycota</taxon>
        <taxon>Pezizomycotina</taxon>
        <taxon>Sordariomycetes</taxon>
        <taxon>Hypocreomycetidae</taxon>
        <taxon>Hypocreales</taxon>
        <taxon>Clavicipitaceae</taxon>
        <taxon>Metarhizium</taxon>
    </lineage>
</organism>
<sequence length="142" mass="16524">MAISDSVSPEPQQLLCLTITAFRKPGMSEAAYREYMTKTHAPLVSGLMEEYGIVRYNMTHNNSKSRPLLFQLYDPEFSKLSDYDCIVQFVFRRMEDFLRMKSDPRFLEKVAPDHQKFADTSRSTMTIGYFEEFLENGKVVPK</sequence>